<gene>
    <name type="primary">TRMT12</name>
    <name type="synonym">TYW2</name>
</gene>
<feature type="chain" id="PRO_0000281835" description="tRNA wybutosine-synthesizing protein 2 homolog">
    <location>
        <begin position="1"/>
        <end position="438"/>
    </location>
</feature>
<feature type="binding site" evidence="2">
    <location>
        <position position="209"/>
    </location>
    <ligand>
        <name>S-adenosyl-L-methionine</name>
        <dbReference type="ChEBI" id="CHEBI:59789"/>
    </ligand>
</feature>
<feature type="binding site" evidence="2">
    <location>
        <position position="216"/>
    </location>
    <ligand>
        <name>S-adenosyl-L-methionine</name>
        <dbReference type="ChEBI" id="CHEBI:59789"/>
    </ligand>
</feature>
<feature type="binding site" evidence="2">
    <location>
        <position position="256"/>
    </location>
    <ligand>
        <name>S-adenosyl-L-methionine</name>
        <dbReference type="ChEBI" id="CHEBI:59789"/>
    </ligand>
</feature>
<feature type="binding site" evidence="2">
    <location>
        <begin position="284"/>
        <end position="285"/>
    </location>
    <ligand>
        <name>S-adenosyl-L-methionine</name>
        <dbReference type="ChEBI" id="CHEBI:59789"/>
    </ligand>
</feature>
<evidence type="ECO:0000250" key="1"/>
<evidence type="ECO:0000255" key="2">
    <source>
        <dbReference type="PROSITE-ProRule" id="PRU01021"/>
    </source>
</evidence>
<protein>
    <recommendedName>
        <fullName>tRNA wybutosine-synthesizing protein 2 homolog</fullName>
        <shortName>tRNA-yW-synthesizing protein 2</shortName>
        <ecNumber>2.5.1.114</ecNumber>
    </recommendedName>
    <alternativeName>
        <fullName>tRNA(Phe) (4-demethylwyosine(37)-C(7)) aminocarboxypropyltransferase</fullName>
    </alternativeName>
</protein>
<organism>
    <name type="scientific">Bos taurus</name>
    <name type="common">Bovine</name>
    <dbReference type="NCBI Taxonomy" id="9913"/>
    <lineage>
        <taxon>Eukaryota</taxon>
        <taxon>Metazoa</taxon>
        <taxon>Chordata</taxon>
        <taxon>Craniata</taxon>
        <taxon>Vertebrata</taxon>
        <taxon>Euteleostomi</taxon>
        <taxon>Mammalia</taxon>
        <taxon>Eutheria</taxon>
        <taxon>Laurasiatheria</taxon>
        <taxon>Artiodactyla</taxon>
        <taxon>Ruminantia</taxon>
        <taxon>Pecora</taxon>
        <taxon>Bovidae</taxon>
        <taxon>Bovinae</taxon>
        <taxon>Bos</taxon>
    </lineage>
</organism>
<comment type="function">
    <text evidence="1">S-adenosyl-L-methionine-dependent transferase that acts as a component of the wybutosine biosynthesis pathway. Wybutosine is a hyper modified guanosine with a tricyclic base found at the 3'-position adjacent to the anticodon of eukaryotic phenylalanine tRNA. Catalyzes the transfer of the alpha-amino-alpha-carboxypropyl (acp) group from S-adenosyl-L-methionine to the C-7 position of 4-demethylwyosine (imG-14) to produce wybutosine-86 (By similarity).</text>
</comment>
<comment type="catalytic activity">
    <reaction>
        <text>4-demethylwyosine(37) in tRNA(Phe) + S-adenosyl-L-methionine = 4-demethyl-7-[(3S)-3-amino-3-carboxypropyl]wyosine(37) in tRNA(Phe) + S-methyl-5'-thioadenosine + H(+)</text>
        <dbReference type="Rhea" id="RHEA:36355"/>
        <dbReference type="Rhea" id="RHEA-COMP:10164"/>
        <dbReference type="Rhea" id="RHEA-COMP:10378"/>
        <dbReference type="ChEBI" id="CHEBI:15378"/>
        <dbReference type="ChEBI" id="CHEBI:17509"/>
        <dbReference type="ChEBI" id="CHEBI:59789"/>
        <dbReference type="ChEBI" id="CHEBI:64315"/>
        <dbReference type="ChEBI" id="CHEBI:73550"/>
        <dbReference type="EC" id="2.5.1.114"/>
    </reaction>
</comment>
<comment type="pathway">
    <text>tRNA modification; wybutosine-tRNA(Phe) biosynthesis.</text>
</comment>
<comment type="similarity">
    <text evidence="2">Belongs to the class I-like SAM-binding methyltransferase superfamily. TRM5/TYW2 family.</text>
</comment>
<keyword id="KW-1185">Reference proteome</keyword>
<keyword id="KW-0949">S-adenosyl-L-methionine</keyword>
<keyword id="KW-0808">Transferase</keyword>
<keyword id="KW-0819">tRNA processing</keyword>
<proteinExistence type="evidence at transcript level"/>
<accession>Q58D65</accession>
<reference key="1">
    <citation type="journal article" date="2005" name="BMC Genomics">
        <title>Characterization of 954 bovine full-CDS cDNA sequences.</title>
        <authorList>
            <person name="Harhay G.P."/>
            <person name="Sonstegard T.S."/>
            <person name="Keele J.W."/>
            <person name="Heaton M.P."/>
            <person name="Clawson M.L."/>
            <person name="Snelling W.M."/>
            <person name="Wiedmann R.T."/>
            <person name="Van Tassell C.P."/>
            <person name="Smith T.P.L."/>
        </authorList>
    </citation>
    <scope>NUCLEOTIDE SEQUENCE [LARGE SCALE MRNA]</scope>
</reference>
<dbReference type="EC" id="2.5.1.114"/>
<dbReference type="EMBL" id="BT021732">
    <property type="protein sequence ID" value="AAX46579.1"/>
    <property type="molecule type" value="mRNA"/>
</dbReference>
<dbReference type="RefSeq" id="NP_001019723.1">
    <property type="nucleotide sequence ID" value="NM_001024552.1"/>
</dbReference>
<dbReference type="SMR" id="Q58D65"/>
<dbReference type="FunCoup" id="Q58D65">
    <property type="interactions" value="2461"/>
</dbReference>
<dbReference type="STRING" id="9913.ENSBTAP00000027186"/>
<dbReference type="PaxDb" id="9913-ENSBTAP00000027186"/>
<dbReference type="GeneID" id="516516"/>
<dbReference type="KEGG" id="bta:516516"/>
<dbReference type="CTD" id="55039"/>
<dbReference type="eggNOG" id="KOG1227">
    <property type="taxonomic scope" value="Eukaryota"/>
</dbReference>
<dbReference type="InParanoid" id="Q58D65"/>
<dbReference type="OrthoDB" id="408788at2759"/>
<dbReference type="UniPathway" id="UPA00375"/>
<dbReference type="Proteomes" id="UP000009136">
    <property type="component" value="Unplaced"/>
</dbReference>
<dbReference type="GO" id="GO:0005737">
    <property type="term" value="C:cytoplasm"/>
    <property type="evidence" value="ECO:0000318"/>
    <property type="project" value="GO_Central"/>
</dbReference>
<dbReference type="GO" id="GO:0102522">
    <property type="term" value="F:tRNA 4-demethylwyosine alpha-amino-alpha-carboxypropyltransferase activity"/>
    <property type="evidence" value="ECO:0007669"/>
    <property type="project" value="UniProtKB-EC"/>
</dbReference>
<dbReference type="GO" id="GO:0008175">
    <property type="term" value="F:tRNA methyltransferase activity"/>
    <property type="evidence" value="ECO:0000318"/>
    <property type="project" value="GO_Central"/>
</dbReference>
<dbReference type="GO" id="GO:0030488">
    <property type="term" value="P:tRNA methylation"/>
    <property type="evidence" value="ECO:0000318"/>
    <property type="project" value="GO_Central"/>
</dbReference>
<dbReference type="GO" id="GO:0031591">
    <property type="term" value="P:wybutosine biosynthetic process"/>
    <property type="evidence" value="ECO:0000318"/>
    <property type="project" value="GO_Central"/>
</dbReference>
<dbReference type="CDD" id="cd02440">
    <property type="entry name" value="AdoMet_MTases"/>
    <property type="match status" value="1"/>
</dbReference>
<dbReference type="FunFam" id="3.30.300.110:FF:000002">
    <property type="entry name" value="tRNA wybutosine-synthesizing protein 2 homolog"/>
    <property type="match status" value="1"/>
</dbReference>
<dbReference type="FunFam" id="3.40.50.150:FF:000201">
    <property type="entry name" value="tRNA wybutosine-synthesizing protein 2 homolog"/>
    <property type="match status" value="1"/>
</dbReference>
<dbReference type="Gene3D" id="3.30.300.110">
    <property type="entry name" value="Met-10+ protein-like domains"/>
    <property type="match status" value="1"/>
</dbReference>
<dbReference type="Gene3D" id="3.40.50.150">
    <property type="entry name" value="Vaccinia Virus protein VP39"/>
    <property type="match status" value="1"/>
</dbReference>
<dbReference type="InterPro" id="IPR030382">
    <property type="entry name" value="MeTrfase_TRM5/TYW2"/>
</dbReference>
<dbReference type="InterPro" id="IPR029063">
    <property type="entry name" value="SAM-dependent_MTases_sf"/>
</dbReference>
<dbReference type="InterPro" id="IPR056743">
    <property type="entry name" value="TRM5-TYW2-like_MTfase"/>
</dbReference>
<dbReference type="InterPro" id="IPR056744">
    <property type="entry name" value="TRM5/TYW2-like_N"/>
</dbReference>
<dbReference type="InterPro" id="IPR056745">
    <property type="entry name" value="TYW2_N"/>
</dbReference>
<dbReference type="PANTHER" id="PTHR23245">
    <property type="entry name" value="TRNA METHYLTRANSFERASE"/>
    <property type="match status" value="1"/>
</dbReference>
<dbReference type="PANTHER" id="PTHR23245:SF25">
    <property type="entry name" value="TRNA WYBUTOSINE-SYNTHESIZING PROTEIN 2 HOMOLOG"/>
    <property type="match status" value="1"/>
</dbReference>
<dbReference type="Pfam" id="PF02475">
    <property type="entry name" value="TRM5-TYW2_MTfase"/>
    <property type="match status" value="1"/>
</dbReference>
<dbReference type="Pfam" id="PF25132">
    <property type="entry name" value="TYW2_N"/>
    <property type="match status" value="1"/>
</dbReference>
<dbReference type="Pfam" id="PF25133">
    <property type="entry name" value="TYW2_N_2"/>
    <property type="match status" value="1"/>
</dbReference>
<dbReference type="SUPFAM" id="SSF53335">
    <property type="entry name" value="S-adenosyl-L-methionine-dependent methyltransferases"/>
    <property type="match status" value="1"/>
</dbReference>
<dbReference type="PROSITE" id="PS51684">
    <property type="entry name" value="SAM_MT_TRM5_TYW2"/>
    <property type="match status" value="1"/>
</dbReference>
<sequence>MEGAGGKPTAVVAVVTEPRFTQRYREYLEKHKLLDRQHRVKKLRDGTVALPVLREALLEQHLRELRNRVAPGSTCVPTQLLDPVPSKKAQSYSPAQRLCLEVSRWVEGRGVTWSAKLEADLPRSWQRHGDLLLLSEDCFQAKQWRHLEPELWETVASALGAQRLAKRGRVSPDSTRTPAVSLLLGDHGWVEHVDNGIRYKFDVTQCMFSFGNITEKLRVASLPCVGEVLVDLYAGIGYFTLPFLVHAEAAFVHACEWNPHAVVALRNNLELNGVADRCQIHFGDNRKLKLSNVADRVNLGLIPSSEEGWPIACRVLKQDAGGILHIHQNVESFPGKTLQPPGSSEMEEHWPSPHQIISNQLNNGATSDSRRKTLSVATKPEWQRWAKAAETRIATLLHQVHGKRWKTQILHIQPVKSYAPHVDHIVLDLECRPCHLVG</sequence>
<name>TYW2_BOVIN</name>